<organism>
    <name type="scientific">Desulfosudis oleivorans (strain DSM 6200 / JCM 39069 / Hxd3)</name>
    <name type="common">Desulfococcus oleovorans</name>
    <dbReference type="NCBI Taxonomy" id="96561"/>
    <lineage>
        <taxon>Bacteria</taxon>
        <taxon>Pseudomonadati</taxon>
        <taxon>Thermodesulfobacteriota</taxon>
        <taxon>Desulfobacteria</taxon>
        <taxon>Desulfobacterales</taxon>
        <taxon>Desulfosudaceae</taxon>
        <taxon>Desulfosudis</taxon>
    </lineage>
</organism>
<comment type="function">
    <text evidence="1">Murein-degrading enzyme that degrades murein glycan strands and insoluble, high-molecular weight murein sacculi, with the concomitant formation of a 1,6-anhydromuramoyl product. Lytic transglycosylases (LTs) play an integral role in the metabolism of the peptidoglycan (PG) sacculus. Their lytic action creates space within the PG sacculus to allow for its expansion as well as for the insertion of various structures such as secretion systems and flagella.</text>
</comment>
<comment type="catalytic activity">
    <reaction evidence="1">
        <text>Exolytic cleavage of the (1-&gt;4)-beta-glycosidic linkage between N-acetylmuramic acid (MurNAc) and N-acetylglucosamine (GlcNAc) residues in peptidoglycan, from either the reducing or the non-reducing ends of the peptidoglycan chains, with concomitant formation of a 1,6-anhydrobond in the MurNAc residue.</text>
        <dbReference type="EC" id="4.2.2.n1"/>
    </reaction>
</comment>
<comment type="subcellular location">
    <subcellularLocation>
        <location>Cell outer membrane</location>
        <topology>Peripheral membrane protein</topology>
    </subcellularLocation>
    <text evidence="1">Attached to the inner leaflet of the outer membrane.</text>
</comment>
<comment type="domain">
    <text evidence="1">The N-terminal domain does not have lytic activity and probably modulates enzymatic activity. The C-terminal domain is the catalytic active domain.</text>
</comment>
<comment type="similarity">
    <text evidence="1">In the N-terminal section; belongs to the bacterial solute-binding protein 3 family.</text>
</comment>
<comment type="similarity">
    <text evidence="1">In the C-terminal section; belongs to the transglycosylase Slt family.</text>
</comment>
<comment type="sequence caution" evidence="2">
    <conflict type="erroneous initiation">
        <sequence resource="EMBL-CDS" id="ABW68399"/>
    </conflict>
</comment>
<evidence type="ECO:0000255" key="1">
    <source>
        <dbReference type="HAMAP-Rule" id="MF_02016"/>
    </source>
</evidence>
<evidence type="ECO:0000305" key="2"/>
<reference key="1">
    <citation type="submission" date="2007-10" db="EMBL/GenBank/DDBJ databases">
        <title>Complete sequence of Desulfococcus oleovorans Hxd3.</title>
        <authorList>
            <consortium name="US DOE Joint Genome Institute"/>
            <person name="Copeland A."/>
            <person name="Lucas S."/>
            <person name="Lapidus A."/>
            <person name="Barry K."/>
            <person name="Glavina del Rio T."/>
            <person name="Dalin E."/>
            <person name="Tice H."/>
            <person name="Pitluck S."/>
            <person name="Kiss H."/>
            <person name="Brettin T."/>
            <person name="Bruce D."/>
            <person name="Detter J.C."/>
            <person name="Han C."/>
            <person name="Schmutz J."/>
            <person name="Larimer F."/>
            <person name="Land M."/>
            <person name="Hauser L."/>
            <person name="Kyrpides N."/>
            <person name="Kim E."/>
            <person name="Wawrik B."/>
            <person name="Richardson P."/>
        </authorList>
    </citation>
    <scope>NUCLEOTIDE SEQUENCE [LARGE SCALE GENOMIC DNA]</scope>
    <source>
        <strain>DSM 6200 / JCM 39069 / Hxd3</strain>
    </source>
</reference>
<gene>
    <name evidence="1" type="primary">mltF</name>
    <name type="ordered locus">Dole_2596</name>
</gene>
<feature type="signal peptide" evidence="1">
    <location>
        <begin position="1"/>
        <end position="24"/>
    </location>
</feature>
<feature type="chain" id="PRO_0000353925" description="Membrane-bound lytic murein transglycosylase F">
    <location>
        <begin position="25"/>
        <end position="454"/>
    </location>
</feature>
<feature type="region of interest" description="Non-LT domain" evidence="1">
    <location>
        <begin position="25"/>
        <end position="265"/>
    </location>
</feature>
<feature type="region of interest" description="LT domain" evidence="1">
    <location>
        <begin position="266"/>
        <end position="454"/>
    </location>
</feature>
<feature type="active site" evidence="1">
    <location>
        <position position="311"/>
    </location>
</feature>
<proteinExistence type="inferred from homology"/>
<keyword id="KW-0998">Cell outer membrane</keyword>
<keyword id="KW-0961">Cell wall biogenesis/degradation</keyword>
<keyword id="KW-0456">Lyase</keyword>
<keyword id="KW-0472">Membrane</keyword>
<keyword id="KW-1185">Reference proteome</keyword>
<keyword id="KW-0732">Signal</keyword>
<dbReference type="EC" id="4.2.2.n1" evidence="1"/>
<dbReference type="EMBL" id="CP000859">
    <property type="protein sequence ID" value="ABW68399.1"/>
    <property type="status" value="ALT_INIT"/>
    <property type="molecule type" value="Genomic_DNA"/>
</dbReference>
<dbReference type="RefSeq" id="WP_041280570.1">
    <property type="nucleotide sequence ID" value="NC_009943.1"/>
</dbReference>
<dbReference type="SMR" id="A8ZWR8"/>
<dbReference type="STRING" id="96561.Dole_2596"/>
<dbReference type="CAZy" id="GH23">
    <property type="family name" value="Glycoside Hydrolase Family 23"/>
</dbReference>
<dbReference type="KEGG" id="dol:Dole_2596"/>
<dbReference type="eggNOG" id="COG4623">
    <property type="taxonomic scope" value="Bacteria"/>
</dbReference>
<dbReference type="HOGENOM" id="CLU_027494_0_1_7"/>
<dbReference type="OrthoDB" id="9801695at2"/>
<dbReference type="Proteomes" id="UP000008561">
    <property type="component" value="Chromosome"/>
</dbReference>
<dbReference type="GO" id="GO:0009279">
    <property type="term" value="C:cell outer membrane"/>
    <property type="evidence" value="ECO:0007669"/>
    <property type="project" value="UniProtKB-SubCell"/>
</dbReference>
<dbReference type="GO" id="GO:0008933">
    <property type="term" value="F:peptidoglycan lytic transglycosylase activity"/>
    <property type="evidence" value="ECO:0007669"/>
    <property type="project" value="InterPro"/>
</dbReference>
<dbReference type="GO" id="GO:0071555">
    <property type="term" value="P:cell wall organization"/>
    <property type="evidence" value="ECO:0007669"/>
    <property type="project" value="UniProtKB-KW"/>
</dbReference>
<dbReference type="GO" id="GO:0000270">
    <property type="term" value="P:peptidoglycan metabolic process"/>
    <property type="evidence" value="ECO:0007669"/>
    <property type="project" value="InterPro"/>
</dbReference>
<dbReference type="CDD" id="cd13403">
    <property type="entry name" value="MLTF-like"/>
    <property type="match status" value="1"/>
</dbReference>
<dbReference type="CDD" id="cd01009">
    <property type="entry name" value="PBP2_YfhD_N"/>
    <property type="match status" value="1"/>
</dbReference>
<dbReference type="Gene3D" id="1.10.530.10">
    <property type="match status" value="1"/>
</dbReference>
<dbReference type="Gene3D" id="3.40.190.10">
    <property type="entry name" value="Periplasmic binding protein-like II"/>
    <property type="match status" value="2"/>
</dbReference>
<dbReference type="HAMAP" id="MF_02016">
    <property type="entry name" value="MltF"/>
    <property type="match status" value="1"/>
</dbReference>
<dbReference type="InterPro" id="IPR023346">
    <property type="entry name" value="Lysozyme-like_dom_sf"/>
</dbReference>
<dbReference type="InterPro" id="IPR023703">
    <property type="entry name" value="MltF"/>
</dbReference>
<dbReference type="InterPro" id="IPR001638">
    <property type="entry name" value="Solute-binding_3/MltF_N"/>
</dbReference>
<dbReference type="InterPro" id="IPR000189">
    <property type="entry name" value="Transglyc_AS"/>
</dbReference>
<dbReference type="InterPro" id="IPR008258">
    <property type="entry name" value="Transglycosylase_SLT_dom_1"/>
</dbReference>
<dbReference type="NCBIfam" id="NF008112">
    <property type="entry name" value="PRK10859.1"/>
    <property type="match status" value="1"/>
</dbReference>
<dbReference type="PANTHER" id="PTHR35936">
    <property type="entry name" value="MEMBRANE-BOUND LYTIC MUREIN TRANSGLYCOSYLASE F"/>
    <property type="match status" value="1"/>
</dbReference>
<dbReference type="PANTHER" id="PTHR35936:SF32">
    <property type="entry name" value="MEMBRANE-BOUND LYTIC MUREIN TRANSGLYCOSYLASE F"/>
    <property type="match status" value="1"/>
</dbReference>
<dbReference type="Pfam" id="PF00497">
    <property type="entry name" value="SBP_bac_3"/>
    <property type="match status" value="1"/>
</dbReference>
<dbReference type="Pfam" id="PF01464">
    <property type="entry name" value="SLT"/>
    <property type="match status" value="1"/>
</dbReference>
<dbReference type="SMART" id="SM00062">
    <property type="entry name" value="PBPb"/>
    <property type="match status" value="1"/>
</dbReference>
<dbReference type="SUPFAM" id="SSF53955">
    <property type="entry name" value="Lysozyme-like"/>
    <property type="match status" value="1"/>
</dbReference>
<dbReference type="SUPFAM" id="SSF53850">
    <property type="entry name" value="Periplasmic binding protein-like II"/>
    <property type="match status" value="1"/>
</dbReference>
<dbReference type="PROSITE" id="PS00922">
    <property type="entry name" value="TRANSGLYCOSYLASE"/>
    <property type="match status" value="1"/>
</dbReference>
<accession>A8ZWR8</accession>
<name>MLTF_DESOH</name>
<sequence length="454" mass="52993">MRRPLRRVTVVLLWVALAIGVAWFYDYRRSMQSLWKIRQHGKIVVLTENNANSYYIYKETPMGFEYDLAKAFAGHLGVDLEVKTPGWDALFASLQRGDGDFIAASMTHTRKREQYADFSEPYLSVRQHLILHKSDHSIVTPAGLAGRTVHVREDTTYQQRLEALQADGIDLQLVLHRNTPTEELIEQVAKRQIDITVADSAIALLNRRYYPDIRIAFPIEKEQPLAWAVRKGDRGLRTEINRFFDEIKENGTFTRIYNRYYTAVDTFDYVDVKKFHQRIYTRLPRFRPLIEKAADRHGFDWQMIAAVIYQESHFDPFAQSHTGVKGLMQLTRVTAEEMGVTDRFDFEQNITAGVAYLAKLRHRFDDIEDPRTRLLFALASYNIGYGHVRDAQQIAKNMGMDPNRWQSLKEVLPLLRNREYYADTTYGYARGNEAVRYIERILTYYDILKQKKAV</sequence>
<protein>
    <recommendedName>
        <fullName evidence="1">Membrane-bound lytic murein transglycosylase F</fullName>
        <ecNumber evidence="1">4.2.2.n1</ecNumber>
    </recommendedName>
    <alternativeName>
        <fullName evidence="1">Murein lyase F</fullName>
    </alternativeName>
</protein>